<proteinExistence type="inferred from homology"/>
<dbReference type="EC" id="1.2.1.70" evidence="1"/>
<dbReference type="EMBL" id="CP000970">
    <property type="protein sequence ID" value="ACB16490.1"/>
    <property type="molecule type" value="Genomic_DNA"/>
</dbReference>
<dbReference type="RefSeq" id="WP_001330437.1">
    <property type="nucleotide sequence ID" value="NC_010498.1"/>
</dbReference>
<dbReference type="SMR" id="B1LH90"/>
<dbReference type="KEGG" id="ecm:EcSMS35_1932"/>
<dbReference type="HOGENOM" id="CLU_035113_2_2_6"/>
<dbReference type="UniPathway" id="UPA00251">
    <property type="reaction ID" value="UER00316"/>
</dbReference>
<dbReference type="Proteomes" id="UP000007011">
    <property type="component" value="Chromosome"/>
</dbReference>
<dbReference type="GO" id="GO:0008883">
    <property type="term" value="F:glutamyl-tRNA reductase activity"/>
    <property type="evidence" value="ECO:0007669"/>
    <property type="project" value="UniProtKB-UniRule"/>
</dbReference>
<dbReference type="GO" id="GO:0050661">
    <property type="term" value="F:NADP binding"/>
    <property type="evidence" value="ECO:0007669"/>
    <property type="project" value="InterPro"/>
</dbReference>
<dbReference type="GO" id="GO:0019353">
    <property type="term" value="P:protoporphyrinogen IX biosynthetic process from glutamate"/>
    <property type="evidence" value="ECO:0007669"/>
    <property type="project" value="TreeGrafter"/>
</dbReference>
<dbReference type="CDD" id="cd05213">
    <property type="entry name" value="NAD_bind_Glutamyl_tRNA_reduct"/>
    <property type="match status" value="1"/>
</dbReference>
<dbReference type="FunFam" id="3.30.460.30:FF:000001">
    <property type="entry name" value="Glutamyl-tRNA reductase"/>
    <property type="match status" value="1"/>
</dbReference>
<dbReference type="FunFam" id="3.40.50.720:FF:000031">
    <property type="entry name" value="Glutamyl-tRNA reductase"/>
    <property type="match status" value="1"/>
</dbReference>
<dbReference type="Gene3D" id="3.30.460.30">
    <property type="entry name" value="Glutamyl-tRNA reductase, N-terminal domain"/>
    <property type="match status" value="1"/>
</dbReference>
<dbReference type="Gene3D" id="3.40.50.720">
    <property type="entry name" value="NAD(P)-binding Rossmann-like Domain"/>
    <property type="match status" value="1"/>
</dbReference>
<dbReference type="HAMAP" id="MF_00087">
    <property type="entry name" value="Glu_tRNA_reductase"/>
    <property type="match status" value="1"/>
</dbReference>
<dbReference type="InterPro" id="IPR000343">
    <property type="entry name" value="4pyrrol_synth_GluRdtase"/>
</dbReference>
<dbReference type="InterPro" id="IPR015896">
    <property type="entry name" value="4pyrrol_synth_GluRdtase_dimer"/>
</dbReference>
<dbReference type="InterPro" id="IPR015895">
    <property type="entry name" value="4pyrrol_synth_GluRdtase_N"/>
</dbReference>
<dbReference type="InterPro" id="IPR018214">
    <property type="entry name" value="GluRdtase_CS"/>
</dbReference>
<dbReference type="InterPro" id="IPR036453">
    <property type="entry name" value="GluRdtase_dimer_dom_sf"/>
</dbReference>
<dbReference type="InterPro" id="IPR036343">
    <property type="entry name" value="GluRdtase_N_sf"/>
</dbReference>
<dbReference type="InterPro" id="IPR036291">
    <property type="entry name" value="NAD(P)-bd_dom_sf"/>
</dbReference>
<dbReference type="InterPro" id="IPR006151">
    <property type="entry name" value="Shikm_DH/Glu-tRNA_Rdtase"/>
</dbReference>
<dbReference type="NCBIfam" id="TIGR01035">
    <property type="entry name" value="hemA"/>
    <property type="match status" value="1"/>
</dbReference>
<dbReference type="PANTHER" id="PTHR43013">
    <property type="entry name" value="GLUTAMYL-TRNA REDUCTASE"/>
    <property type="match status" value="1"/>
</dbReference>
<dbReference type="PANTHER" id="PTHR43013:SF1">
    <property type="entry name" value="GLUTAMYL-TRNA REDUCTASE"/>
    <property type="match status" value="1"/>
</dbReference>
<dbReference type="Pfam" id="PF00745">
    <property type="entry name" value="GlutR_dimer"/>
    <property type="match status" value="1"/>
</dbReference>
<dbReference type="Pfam" id="PF05201">
    <property type="entry name" value="GlutR_N"/>
    <property type="match status" value="1"/>
</dbReference>
<dbReference type="Pfam" id="PF01488">
    <property type="entry name" value="Shikimate_DH"/>
    <property type="match status" value="1"/>
</dbReference>
<dbReference type="PIRSF" id="PIRSF000445">
    <property type="entry name" value="4pyrrol_synth_GluRdtase"/>
    <property type="match status" value="1"/>
</dbReference>
<dbReference type="SUPFAM" id="SSF69742">
    <property type="entry name" value="Glutamyl tRNA-reductase catalytic, N-terminal domain"/>
    <property type="match status" value="1"/>
</dbReference>
<dbReference type="SUPFAM" id="SSF69075">
    <property type="entry name" value="Glutamyl tRNA-reductase dimerization domain"/>
    <property type="match status" value="1"/>
</dbReference>
<dbReference type="SUPFAM" id="SSF51735">
    <property type="entry name" value="NAD(P)-binding Rossmann-fold domains"/>
    <property type="match status" value="1"/>
</dbReference>
<dbReference type="PROSITE" id="PS00747">
    <property type="entry name" value="GLUTR"/>
    <property type="match status" value="1"/>
</dbReference>
<keyword id="KW-0521">NADP</keyword>
<keyword id="KW-0560">Oxidoreductase</keyword>
<keyword id="KW-0627">Porphyrin biosynthesis</keyword>
<protein>
    <recommendedName>
        <fullName evidence="1">Glutamyl-tRNA reductase</fullName>
        <shortName evidence="1">GluTR</shortName>
        <ecNumber evidence="1">1.2.1.70</ecNumber>
    </recommendedName>
</protein>
<sequence length="418" mass="46317">MTLLALGINHKTAPVSLRERVSFSPDKLDQALDSLLAQPMVQGGVVLSTCNRTELYLSVEERDDLQEALIRWLCDYHNLNEDDLRNSLYWHQDNDAVSHLMRVASGLDSLVLGEPQILGQVKKAFADSQKGHMKASELERMFQKSFSVAKRVRTETDIGASAVSVAFAACTLARQIFESLSTVTVLLVGAGETIELVARHLREHKVQKMIIANRTRERAQILADEVGAEVIALSDIDERLREADIIISSTASPLPIIGKGMVERALKSRRNQPMLLVDIAVPRDVEPEVGKLANAYLYSVDDLQSIISHNLAQRKAAAVEAETIVAQETSEFMAWLRAQSASETIREYRSQAEHVRDELTAKALAALEQGGDAQAIMQDLAWKLTNRLIHAPTKSLQQAARDGDNERLNILRDSLGLE</sequence>
<comment type="function">
    <text evidence="1">Catalyzes the NADPH-dependent reduction of glutamyl-tRNA(Glu) to glutamate 1-semialdehyde (GSA).</text>
</comment>
<comment type="catalytic activity">
    <reaction evidence="1">
        <text>(S)-4-amino-5-oxopentanoate + tRNA(Glu) + NADP(+) = L-glutamyl-tRNA(Glu) + NADPH + H(+)</text>
        <dbReference type="Rhea" id="RHEA:12344"/>
        <dbReference type="Rhea" id="RHEA-COMP:9663"/>
        <dbReference type="Rhea" id="RHEA-COMP:9680"/>
        <dbReference type="ChEBI" id="CHEBI:15378"/>
        <dbReference type="ChEBI" id="CHEBI:57501"/>
        <dbReference type="ChEBI" id="CHEBI:57783"/>
        <dbReference type="ChEBI" id="CHEBI:58349"/>
        <dbReference type="ChEBI" id="CHEBI:78442"/>
        <dbReference type="ChEBI" id="CHEBI:78520"/>
        <dbReference type="EC" id="1.2.1.70"/>
    </reaction>
</comment>
<comment type="pathway">
    <text evidence="1">Porphyrin-containing compound metabolism; protoporphyrin-IX biosynthesis; 5-aminolevulinate from L-glutamyl-tRNA(Glu): step 1/2.</text>
</comment>
<comment type="subunit">
    <text evidence="1">Homodimer.</text>
</comment>
<comment type="domain">
    <text evidence="1">Possesses an unusual extended V-shaped dimeric structure with each monomer consisting of three distinct domains arranged along a curved 'spinal' alpha-helix. The N-terminal catalytic domain specifically recognizes the glutamate moiety of the substrate. The second domain is the NADPH-binding domain, and the third C-terminal domain is responsible for dimerization.</text>
</comment>
<comment type="miscellaneous">
    <text evidence="1">During catalysis, the active site Cys acts as a nucleophile attacking the alpha-carbonyl group of tRNA-bound glutamate with the formation of a thioester intermediate between enzyme and glutamate, and the concomitant release of tRNA(Glu). The thioester intermediate is finally reduced by direct hydride transfer from NADPH, to form the product GSA.</text>
</comment>
<comment type="similarity">
    <text evidence="1">Belongs to the glutamyl-tRNA reductase family.</text>
</comment>
<name>HEM1_ECOSM</name>
<gene>
    <name evidence="1" type="primary">hemA</name>
    <name type="ordered locus">EcSMS35_1932</name>
</gene>
<reference key="1">
    <citation type="journal article" date="2008" name="J. Bacteriol.">
        <title>Insights into the environmental resistance gene pool from the genome sequence of the multidrug-resistant environmental isolate Escherichia coli SMS-3-5.</title>
        <authorList>
            <person name="Fricke W.F."/>
            <person name="Wright M.S."/>
            <person name="Lindell A.H."/>
            <person name="Harkins D.M."/>
            <person name="Baker-Austin C."/>
            <person name="Ravel J."/>
            <person name="Stepanauskas R."/>
        </authorList>
    </citation>
    <scope>NUCLEOTIDE SEQUENCE [LARGE SCALE GENOMIC DNA]</scope>
    <source>
        <strain>SMS-3-5 / SECEC</strain>
    </source>
</reference>
<evidence type="ECO:0000255" key="1">
    <source>
        <dbReference type="HAMAP-Rule" id="MF_00087"/>
    </source>
</evidence>
<feature type="chain" id="PRO_1000190522" description="Glutamyl-tRNA reductase">
    <location>
        <begin position="1"/>
        <end position="418"/>
    </location>
</feature>
<feature type="active site" description="Nucleophile" evidence="1">
    <location>
        <position position="50"/>
    </location>
</feature>
<feature type="binding site" evidence="1">
    <location>
        <begin position="49"/>
        <end position="52"/>
    </location>
    <ligand>
        <name>substrate</name>
    </ligand>
</feature>
<feature type="binding site" evidence="1">
    <location>
        <position position="109"/>
    </location>
    <ligand>
        <name>substrate</name>
    </ligand>
</feature>
<feature type="binding site" evidence="1">
    <location>
        <begin position="114"/>
        <end position="116"/>
    </location>
    <ligand>
        <name>substrate</name>
    </ligand>
</feature>
<feature type="binding site" evidence="1">
    <location>
        <position position="120"/>
    </location>
    <ligand>
        <name>substrate</name>
    </ligand>
</feature>
<feature type="binding site" evidence="1">
    <location>
        <begin position="189"/>
        <end position="194"/>
    </location>
    <ligand>
        <name>NADP(+)</name>
        <dbReference type="ChEBI" id="CHEBI:58349"/>
    </ligand>
</feature>
<feature type="site" description="Important for activity" evidence="1">
    <location>
        <position position="99"/>
    </location>
</feature>
<organism>
    <name type="scientific">Escherichia coli (strain SMS-3-5 / SECEC)</name>
    <dbReference type="NCBI Taxonomy" id="439855"/>
    <lineage>
        <taxon>Bacteria</taxon>
        <taxon>Pseudomonadati</taxon>
        <taxon>Pseudomonadota</taxon>
        <taxon>Gammaproteobacteria</taxon>
        <taxon>Enterobacterales</taxon>
        <taxon>Enterobacteriaceae</taxon>
        <taxon>Escherichia</taxon>
    </lineage>
</organism>
<accession>B1LH90</accession>